<sequence>MWNRGRIVSLMRTVSSGSCSCPAHSRPVAISQQTSCSAEKDTAFEMSSSTIRYGPGVTRELGHDLQNLGAKSVCVVSDRNVLQLPSVKVGLDAIVRAGIEPVLFDAVRVEPTNESLQTAIDFARSHRFDAFVAIGGGSAIDTCKVANLYSADREAEFLDYVNVPIGRAKEVTVPLKPLIAVPTTAGTGSETTGVAIFDHKPLHAKTGISSKALRPILGLVDPLHTLSQPEKVAAYCGFDVFCHALESFTAIPYTERGPAPANPKLRPPYQGSNPISDVWARFALQTISRHFRRAVYAPDDLEARSQMHLASTMAGVGFGNAGVHLCHGLSYPIAGLVKQFIPDGYTGAHPIIPHGLSVVMTAPSVFRFTGASCPDRHLEAAGILGADVAKSHRNDAGAILADTVRRYMHDLKIENGLSALGFNYSDIPALVKGTLPQERITKLAPRAQSEEDLAGLFEQSLTVY</sequence>
<proteinExistence type="inferred from homology"/>
<comment type="function">
    <text evidence="1">Catalyzes the cofactor-independent reversible oxidation of gamma-hydroxybutyrate (GHB) to succinic semialdehyde (SSA) coupled to reduction of 2-ketoglutarate (2-KG) to D-2-hydroxyglutarate (D-2-HG). L-3-hydroxybutyrate (L-3-OHB) is also a substrate for HOT when using 2-KG as hydrogen acceptor, resulting in the formation of D-2-HG (By similarity).</text>
</comment>
<comment type="catalytic activity">
    <reaction>
        <text>(S)-3-hydroxybutanoate + 2-oxoglutarate = (R)-2-hydroxyglutarate + acetoacetate</text>
        <dbReference type="Rhea" id="RHEA:23048"/>
        <dbReference type="ChEBI" id="CHEBI:11047"/>
        <dbReference type="ChEBI" id="CHEBI:13705"/>
        <dbReference type="ChEBI" id="CHEBI:15801"/>
        <dbReference type="ChEBI" id="CHEBI:16810"/>
        <dbReference type="EC" id="1.1.99.24"/>
    </reaction>
</comment>
<comment type="catalytic activity">
    <reaction>
        <text>4-hydroxybutanoate + 2-oxoglutarate = (R)-2-hydroxyglutarate + succinate semialdehyde</text>
        <dbReference type="Rhea" id="RHEA:24734"/>
        <dbReference type="ChEBI" id="CHEBI:15801"/>
        <dbReference type="ChEBI" id="CHEBI:16724"/>
        <dbReference type="ChEBI" id="CHEBI:16810"/>
        <dbReference type="ChEBI" id="CHEBI:57706"/>
        <dbReference type="EC" id="1.1.99.24"/>
    </reaction>
</comment>
<comment type="subcellular location">
    <subcellularLocation>
        <location evidence="1">Mitochondrion</location>
    </subcellularLocation>
</comment>
<comment type="similarity">
    <text evidence="3">Belongs to the iron-containing alcohol dehydrogenase family. Hydroxyacid-oxoacid transhydrogenase subfamily.</text>
</comment>
<organism>
    <name type="scientific">Anopheles gambiae</name>
    <name type="common">African malaria mosquito</name>
    <dbReference type="NCBI Taxonomy" id="7165"/>
    <lineage>
        <taxon>Eukaryota</taxon>
        <taxon>Metazoa</taxon>
        <taxon>Ecdysozoa</taxon>
        <taxon>Arthropoda</taxon>
        <taxon>Hexapoda</taxon>
        <taxon>Insecta</taxon>
        <taxon>Pterygota</taxon>
        <taxon>Neoptera</taxon>
        <taxon>Endopterygota</taxon>
        <taxon>Diptera</taxon>
        <taxon>Nematocera</taxon>
        <taxon>Culicoidea</taxon>
        <taxon>Culicidae</taxon>
        <taxon>Anophelinae</taxon>
        <taxon>Anopheles</taxon>
    </lineage>
</organism>
<reference key="1">
    <citation type="journal article" date="2002" name="Science">
        <title>The genome sequence of the malaria mosquito Anopheles gambiae.</title>
        <authorList>
            <person name="Holt R.A."/>
            <person name="Subramanian G.M."/>
            <person name="Halpern A."/>
            <person name="Sutton G.G."/>
            <person name="Charlab R."/>
            <person name="Nusskern D.R."/>
            <person name="Wincker P."/>
            <person name="Clark A.G."/>
            <person name="Ribeiro J.M.C."/>
            <person name="Wides R."/>
            <person name="Salzberg S.L."/>
            <person name="Loftus B.J."/>
            <person name="Yandell M.D."/>
            <person name="Majoros W.H."/>
            <person name="Rusch D.B."/>
            <person name="Lai Z."/>
            <person name="Kraft C.L."/>
            <person name="Abril J.F."/>
            <person name="Anthouard V."/>
            <person name="Arensburger P."/>
            <person name="Atkinson P.W."/>
            <person name="Baden H."/>
            <person name="de Berardinis V."/>
            <person name="Baldwin D."/>
            <person name="Benes V."/>
            <person name="Biedler J."/>
            <person name="Blass C."/>
            <person name="Bolanos R."/>
            <person name="Boscus D."/>
            <person name="Barnstead M."/>
            <person name="Cai S."/>
            <person name="Center A."/>
            <person name="Chaturverdi K."/>
            <person name="Christophides G.K."/>
            <person name="Chrystal M.A.M."/>
            <person name="Clamp M."/>
            <person name="Cravchik A."/>
            <person name="Curwen V."/>
            <person name="Dana A."/>
            <person name="Delcher A."/>
            <person name="Dew I."/>
            <person name="Evans C.A."/>
            <person name="Flanigan M."/>
            <person name="Grundschober-Freimoser A."/>
            <person name="Friedli L."/>
            <person name="Gu Z."/>
            <person name="Guan P."/>
            <person name="Guigo R."/>
            <person name="Hillenmeyer M.E."/>
            <person name="Hladun S.L."/>
            <person name="Hogan J.R."/>
            <person name="Hong Y.S."/>
            <person name="Hoover J."/>
            <person name="Jaillon O."/>
            <person name="Ke Z."/>
            <person name="Kodira C.D."/>
            <person name="Kokoza E."/>
            <person name="Koutsos A."/>
            <person name="Letunic I."/>
            <person name="Levitsky A.A."/>
            <person name="Liang Y."/>
            <person name="Lin J.-J."/>
            <person name="Lobo N.F."/>
            <person name="Lopez J.R."/>
            <person name="Malek J.A."/>
            <person name="McIntosh T.C."/>
            <person name="Meister S."/>
            <person name="Miller J.R."/>
            <person name="Mobarry C."/>
            <person name="Mongin E."/>
            <person name="Murphy S.D."/>
            <person name="O'Brochta D.A."/>
            <person name="Pfannkoch C."/>
            <person name="Qi R."/>
            <person name="Regier M.A."/>
            <person name="Remington K."/>
            <person name="Shao H."/>
            <person name="Sharakhova M.V."/>
            <person name="Sitter C.D."/>
            <person name="Shetty J."/>
            <person name="Smith T.J."/>
            <person name="Strong R."/>
            <person name="Sun J."/>
            <person name="Thomasova D."/>
            <person name="Ton L.Q."/>
            <person name="Topalis P."/>
            <person name="Tu Z.J."/>
            <person name="Unger M.F."/>
            <person name="Walenz B."/>
            <person name="Wang A.H."/>
            <person name="Wang J."/>
            <person name="Wang M."/>
            <person name="Wang X."/>
            <person name="Woodford K.J."/>
            <person name="Wortman J.R."/>
            <person name="Wu M."/>
            <person name="Yao A."/>
            <person name="Zdobnov E.M."/>
            <person name="Zhang H."/>
            <person name="Zhao Q."/>
            <person name="Zhao S."/>
            <person name="Zhu S.C."/>
            <person name="Zhimulev I."/>
            <person name="Coluzzi M."/>
            <person name="della Torre A."/>
            <person name="Roth C.W."/>
            <person name="Louis C."/>
            <person name="Kalush F."/>
            <person name="Mural R.J."/>
            <person name="Myers E.W."/>
            <person name="Adams M.D."/>
            <person name="Smith H.O."/>
            <person name="Broder S."/>
            <person name="Gardner M.J."/>
            <person name="Fraser C.M."/>
            <person name="Birney E."/>
            <person name="Bork P."/>
            <person name="Brey P.T."/>
            <person name="Venter J.C."/>
            <person name="Weissenbach J."/>
            <person name="Kafatos F.C."/>
            <person name="Collins F.H."/>
            <person name="Hoffman S.L."/>
        </authorList>
    </citation>
    <scope>NUCLEOTIDE SEQUENCE [LARGE SCALE GENOMIC DNA]</scope>
    <source>
        <strain>PEST</strain>
    </source>
</reference>
<protein>
    <recommendedName>
        <fullName>Probable hydroxyacid-oxoacid transhydrogenase, mitochondrial</fullName>
        <shortName>HOT</shortName>
        <ecNumber>1.1.99.24</ecNumber>
    </recommendedName>
</protein>
<keyword id="KW-0496">Mitochondrion</keyword>
<keyword id="KW-0560">Oxidoreductase</keyword>
<keyword id="KW-1185">Reference proteome</keyword>
<keyword id="KW-0809">Transit peptide</keyword>
<name>HOT_ANOGA</name>
<evidence type="ECO:0000250" key="1"/>
<evidence type="ECO:0000255" key="2"/>
<evidence type="ECO:0000305" key="3"/>
<dbReference type="EC" id="1.1.99.24"/>
<dbReference type="EMBL" id="AAAB01008960">
    <property type="protein sequence ID" value="EAA10782.3"/>
    <property type="molecule type" value="Genomic_DNA"/>
</dbReference>
<dbReference type="RefSeq" id="XP_316676.3">
    <property type="nucleotide sequence ID" value="XM_316676.4"/>
</dbReference>
<dbReference type="SMR" id="Q7Q547"/>
<dbReference type="FunCoup" id="Q7Q547">
    <property type="interactions" value="251"/>
</dbReference>
<dbReference type="STRING" id="7165.Q7Q547"/>
<dbReference type="PaxDb" id="7165-AGAP006646-PA"/>
<dbReference type="EnsemblMetazoa" id="AGAP006646-RA">
    <property type="protein sequence ID" value="AGAP006646-PA"/>
    <property type="gene ID" value="AGAP006646"/>
</dbReference>
<dbReference type="GeneID" id="1277230"/>
<dbReference type="KEGG" id="aga:1277230"/>
<dbReference type="CTD" id="37551"/>
<dbReference type="VEuPathDB" id="VectorBase:AGAMI1_008800"/>
<dbReference type="VEuPathDB" id="VectorBase:AGAP006646"/>
<dbReference type="eggNOG" id="KOG3857">
    <property type="taxonomic scope" value="Eukaryota"/>
</dbReference>
<dbReference type="HOGENOM" id="CLU_007207_0_7_1"/>
<dbReference type="InParanoid" id="Q7Q547"/>
<dbReference type="OMA" id="NLMGAGC"/>
<dbReference type="PhylomeDB" id="Q7Q547"/>
<dbReference type="Proteomes" id="UP000007062">
    <property type="component" value="Chromosome 2L"/>
</dbReference>
<dbReference type="GO" id="GO:0005739">
    <property type="term" value="C:mitochondrion"/>
    <property type="evidence" value="ECO:0000250"/>
    <property type="project" value="UniProtKB"/>
</dbReference>
<dbReference type="GO" id="GO:0004022">
    <property type="term" value="F:alcohol dehydrogenase (NAD+) activity"/>
    <property type="evidence" value="ECO:0000318"/>
    <property type="project" value="GO_Central"/>
</dbReference>
<dbReference type="GO" id="GO:0047988">
    <property type="term" value="F:hydroxyacid-oxoacid transhydrogenase activity"/>
    <property type="evidence" value="ECO:0000250"/>
    <property type="project" value="UniProtKB"/>
</dbReference>
<dbReference type="GO" id="GO:0046872">
    <property type="term" value="F:metal ion binding"/>
    <property type="evidence" value="ECO:0007669"/>
    <property type="project" value="InterPro"/>
</dbReference>
<dbReference type="GO" id="GO:0019552">
    <property type="term" value="P:glutamate catabolic process via 2-hydroxyglutarate"/>
    <property type="evidence" value="ECO:0000250"/>
    <property type="project" value="UniProtKB"/>
</dbReference>
<dbReference type="CDD" id="cd08190">
    <property type="entry name" value="HOT"/>
    <property type="match status" value="1"/>
</dbReference>
<dbReference type="FunFam" id="3.40.50.1970:FF:000003">
    <property type="entry name" value="Alcohol dehydrogenase, iron-containing"/>
    <property type="match status" value="1"/>
</dbReference>
<dbReference type="FunFam" id="1.20.1090.10:FF:000003">
    <property type="entry name" value="Probable hydroxyacid-oxoacid transhydrogenase, mitochondrial"/>
    <property type="match status" value="1"/>
</dbReference>
<dbReference type="Gene3D" id="3.40.50.1970">
    <property type="match status" value="1"/>
</dbReference>
<dbReference type="Gene3D" id="1.20.1090.10">
    <property type="entry name" value="Dehydroquinate synthase-like - alpha domain"/>
    <property type="match status" value="1"/>
</dbReference>
<dbReference type="InterPro" id="IPR001670">
    <property type="entry name" value="ADH_Fe/GldA"/>
</dbReference>
<dbReference type="InterPro" id="IPR056798">
    <property type="entry name" value="ADH_Fe_C"/>
</dbReference>
<dbReference type="InterPro" id="IPR039697">
    <property type="entry name" value="Alcohol_dehydrogenase_Fe"/>
</dbReference>
<dbReference type="InterPro" id="IPR042157">
    <property type="entry name" value="HOT"/>
</dbReference>
<dbReference type="PANTHER" id="PTHR11496">
    <property type="entry name" value="ALCOHOL DEHYDROGENASE"/>
    <property type="match status" value="1"/>
</dbReference>
<dbReference type="PANTHER" id="PTHR11496:SF83">
    <property type="entry name" value="HYDROXYACID-OXOACID TRANSHYDROGENASE, MITOCHONDRIAL"/>
    <property type="match status" value="1"/>
</dbReference>
<dbReference type="Pfam" id="PF25137">
    <property type="entry name" value="ADH_Fe_C"/>
    <property type="match status" value="1"/>
</dbReference>
<dbReference type="Pfam" id="PF00465">
    <property type="entry name" value="Fe-ADH"/>
    <property type="match status" value="1"/>
</dbReference>
<dbReference type="SUPFAM" id="SSF56796">
    <property type="entry name" value="Dehydroquinate synthase-like"/>
    <property type="match status" value="1"/>
</dbReference>
<accession>Q7Q547</accession>
<gene>
    <name type="ORF">AGAP006646</name>
</gene>
<feature type="transit peptide" description="Mitochondrion" evidence="2">
    <location>
        <begin position="1"/>
        <end status="unknown"/>
    </location>
</feature>
<feature type="chain" id="PRO_0000323004" description="Probable hydroxyacid-oxoacid transhydrogenase, mitochondrial">
    <location>
        <begin status="unknown"/>
        <end position="464"/>
    </location>
</feature>